<sequence length="163" mass="18358">MTAYDVVIEIPKGSRNKYEVDHETGRVYLDRVLFTAFVYPADYGFFENTLGDDGDPLDVLVLLEYPVFPGVGIKVRPVGVLKMSDEAGGDAKIIAVQHKDPRWQHIQDVNDIPEYTRKEIEHFFARYKDLEPGKFVTIEGWGDAAEAEKIVQAGFANLEAQGH</sequence>
<comment type="function">
    <text evidence="1">Catalyzes the hydrolysis of inorganic pyrophosphate (PPi) forming two phosphate ions.</text>
</comment>
<comment type="catalytic activity">
    <reaction evidence="1">
        <text>diphosphate + H2O = 2 phosphate + H(+)</text>
        <dbReference type="Rhea" id="RHEA:24576"/>
        <dbReference type="ChEBI" id="CHEBI:15377"/>
        <dbReference type="ChEBI" id="CHEBI:15378"/>
        <dbReference type="ChEBI" id="CHEBI:33019"/>
        <dbReference type="ChEBI" id="CHEBI:43474"/>
        <dbReference type="EC" id="3.6.1.1"/>
    </reaction>
</comment>
<comment type="cofactor">
    <cofactor evidence="1">
        <name>Mg(2+)</name>
        <dbReference type="ChEBI" id="CHEBI:18420"/>
    </cofactor>
</comment>
<comment type="subunit">
    <text evidence="1">Homohexamer.</text>
</comment>
<comment type="subcellular location">
    <subcellularLocation>
        <location evidence="1">Cytoplasm</location>
    </subcellularLocation>
</comment>
<comment type="similarity">
    <text evidence="1">Belongs to the PPase family.</text>
</comment>
<protein>
    <recommendedName>
        <fullName evidence="1">Inorganic pyrophosphatase</fullName>
        <ecNumber evidence="1">3.6.1.1</ecNumber>
    </recommendedName>
    <alternativeName>
        <fullName evidence="1">Pyrophosphate phospho-hydrolase</fullName>
        <shortName evidence="1">PPase</shortName>
    </alternativeName>
</protein>
<evidence type="ECO:0000255" key="1">
    <source>
        <dbReference type="HAMAP-Rule" id="MF_00209"/>
    </source>
</evidence>
<organism>
    <name type="scientific">Leifsonia xyli subsp. xyli (strain CTCB07)</name>
    <dbReference type="NCBI Taxonomy" id="281090"/>
    <lineage>
        <taxon>Bacteria</taxon>
        <taxon>Bacillati</taxon>
        <taxon>Actinomycetota</taxon>
        <taxon>Actinomycetes</taxon>
        <taxon>Micrococcales</taxon>
        <taxon>Microbacteriaceae</taxon>
        <taxon>Leifsonia</taxon>
    </lineage>
</organism>
<gene>
    <name evidence="1" type="primary">ppa</name>
    <name type="ordered locus">Lxx21530</name>
</gene>
<accession>Q6ACP7</accession>
<name>IPYR_LEIXX</name>
<proteinExistence type="inferred from homology"/>
<dbReference type="EC" id="3.6.1.1" evidence="1"/>
<dbReference type="EMBL" id="AE016822">
    <property type="protein sequence ID" value="AAT89846.1"/>
    <property type="molecule type" value="Genomic_DNA"/>
</dbReference>
<dbReference type="RefSeq" id="WP_011186830.1">
    <property type="nucleotide sequence ID" value="NC_006087.1"/>
</dbReference>
<dbReference type="SMR" id="Q6ACP7"/>
<dbReference type="STRING" id="281090.Lxx21530"/>
<dbReference type="KEGG" id="lxx:Lxx21530"/>
<dbReference type="eggNOG" id="COG0221">
    <property type="taxonomic scope" value="Bacteria"/>
</dbReference>
<dbReference type="HOGENOM" id="CLU_073198_1_0_11"/>
<dbReference type="Proteomes" id="UP000001306">
    <property type="component" value="Chromosome"/>
</dbReference>
<dbReference type="GO" id="GO:0005737">
    <property type="term" value="C:cytoplasm"/>
    <property type="evidence" value="ECO:0007669"/>
    <property type="project" value="UniProtKB-SubCell"/>
</dbReference>
<dbReference type="GO" id="GO:0004427">
    <property type="term" value="F:inorganic diphosphate phosphatase activity"/>
    <property type="evidence" value="ECO:0007669"/>
    <property type="project" value="UniProtKB-UniRule"/>
</dbReference>
<dbReference type="GO" id="GO:0000287">
    <property type="term" value="F:magnesium ion binding"/>
    <property type="evidence" value="ECO:0007669"/>
    <property type="project" value="UniProtKB-UniRule"/>
</dbReference>
<dbReference type="GO" id="GO:0006796">
    <property type="term" value="P:phosphate-containing compound metabolic process"/>
    <property type="evidence" value="ECO:0007669"/>
    <property type="project" value="InterPro"/>
</dbReference>
<dbReference type="CDD" id="cd00412">
    <property type="entry name" value="pyrophosphatase"/>
    <property type="match status" value="1"/>
</dbReference>
<dbReference type="FunFam" id="3.90.80.10:FF:000003">
    <property type="entry name" value="Inorganic pyrophosphatase"/>
    <property type="match status" value="1"/>
</dbReference>
<dbReference type="Gene3D" id="3.90.80.10">
    <property type="entry name" value="Inorganic pyrophosphatase"/>
    <property type="match status" value="1"/>
</dbReference>
<dbReference type="HAMAP" id="MF_00209">
    <property type="entry name" value="Inorganic_PPase"/>
    <property type="match status" value="1"/>
</dbReference>
<dbReference type="InterPro" id="IPR008162">
    <property type="entry name" value="Pyrophosphatase"/>
</dbReference>
<dbReference type="InterPro" id="IPR036649">
    <property type="entry name" value="Pyrophosphatase_sf"/>
</dbReference>
<dbReference type="NCBIfam" id="NF002317">
    <property type="entry name" value="PRK01250.1"/>
    <property type="match status" value="1"/>
</dbReference>
<dbReference type="PANTHER" id="PTHR10286">
    <property type="entry name" value="INORGANIC PYROPHOSPHATASE"/>
    <property type="match status" value="1"/>
</dbReference>
<dbReference type="Pfam" id="PF00719">
    <property type="entry name" value="Pyrophosphatase"/>
    <property type="match status" value="1"/>
</dbReference>
<dbReference type="SUPFAM" id="SSF50324">
    <property type="entry name" value="Inorganic pyrophosphatase"/>
    <property type="match status" value="1"/>
</dbReference>
<dbReference type="PROSITE" id="PS00387">
    <property type="entry name" value="PPASE"/>
    <property type="match status" value="1"/>
</dbReference>
<reference key="1">
    <citation type="journal article" date="2004" name="Mol. Plant Microbe Interact.">
        <title>The genome sequence of the Gram-positive sugarcane pathogen Leifsonia xyli subsp. xyli.</title>
        <authorList>
            <person name="Monteiro-Vitorello C.B."/>
            <person name="Camargo L.E.A."/>
            <person name="Van Sluys M.A."/>
            <person name="Kitajima J.P."/>
            <person name="Truffi D."/>
            <person name="do Amaral A.M."/>
            <person name="Harakava R."/>
            <person name="de Oliveira J.C.F."/>
            <person name="Wood D."/>
            <person name="de Oliveira M.C."/>
            <person name="Miyaki C.Y."/>
            <person name="Takita M.A."/>
            <person name="da Silva A.C.R."/>
            <person name="Furlan L.R."/>
            <person name="Carraro D.M."/>
            <person name="Camarotte G."/>
            <person name="Almeida N.F. Jr."/>
            <person name="Carrer H."/>
            <person name="Coutinho L.L."/>
            <person name="El-Dorry H.A."/>
            <person name="Ferro M.I.T."/>
            <person name="Gagliardi P.R."/>
            <person name="Giglioti E."/>
            <person name="Goldman M.H.S."/>
            <person name="Goldman G.H."/>
            <person name="Kimura E.T."/>
            <person name="Ferro E.S."/>
            <person name="Kuramae E.E."/>
            <person name="Lemos E.G.M."/>
            <person name="Lemos M.V.F."/>
            <person name="Mauro S.M.Z."/>
            <person name="Machado M.A."/>
            <person name="Marino C.L."/>
            <person name="Menck C.F."/>
            <person name="Nunes L.R."/>
            <person name="Oliveira R.C."/>
            <person name="Pereira G.G."/>
            <person name="Siqueira W."/>
            <person name="de Souza A.A."/>
            <person name="Tsai S.M."/>
            <person name="Zanca A.S."/>
            <person name="Simpson A.J.G."/>
            <person name="Brumbley S.M."/>
            <person name="Setubal J.C."/>
        </authorList>
    </citation>
    <scope>NUCLEOTIDE SEQUENCE [LARGE SCALE GENOMIC DNA]</scope>
    <source>
        <strain>CTCB07</strain>
    </source>
</reference>
<feature type="chain" id="PRO_0000137504" description="Inorganic pyrophosphatase">
    <location>
        <begin position="1"/>
        <end position="163"/>
    </location>
</feature>
<feature type="active site" description="Proton acceptor" evidence="1">
    <location>
        <position position="90"/>
    </location>
</feature>
<feature type="binding site" evidence="1">
    <location>
        <position position="9"/>
    </location>
    <ligand>
        <name>Mg(2+)</name>
        <dbReference type="ChEBI" id="CHEBI:18420"/>
        <label>2</label>
    </ligand>
</feature>
<feature type="binding site" evidence="1">
    <location>
        <position position="17"/>
    </location>
    <ligand>
        <name>substrate</name>
    </ligand>
</feature>
<feature type="binding site" evidence="1">
    <location>
        <position position="31"/>
    </location>
    <ligand>
        <name>substrate</name>
    </ligand>
</feature>
<feature type="binding site" evidence="1">
    <location>
        <position position="43"/>
    </location>
    <ligand>
        <name>substrate</name>
    </ligand>
</feature>
<feature type="binding site" evidence="1">
    <location>
        <position position="53"/>
    </location>
    <ligand>
        <name>Mg(2+)</name>
        <dbReference type="ChEBI" id="CHEBI:18420"/>
        <label>1</label>
    </ligand>
</feature>
<feature type="binding site" evidence="1">
    <location>
        <position position="58"/>
    </location>
    <ligand>
        <name>Mg(2+)</name>
        <dbReference type="ChEBI" id="CHEBI:18420"/>
        <label>1</label>
    </ligand>
</feature>
<feature type="binding site" evidence="1">
    <location>
        <position position="58"/>
    </location>
    <ligand>
        <name>Mg(2+)</name>
        <dbReference type="ChEBI" id="CHEBI:18420"/>
        <label>2</label>
    </ligand>
</feature>
<feature type="binding site" evidence="1">
    <location>
        <position position="85"/>
    </location>
    <ligand>
        <name>Mg(2+)</name>
        <dbReference type="ChEBI" id="CHEBI:18420"/>
        <label>3</label>
    </ligand>
</feature>
<feature type="binding site" evidence="1">
    <location>
        <position position="90"/>
    </location>
    <ligand>
        <name>Mg(2+)</name>
        <dbReference type="ChEBI" id="CHEBI:18420"/>
        <label>1</label>
    </ligand>
</feature>
<feature type="binding site" evidence="1">
    <location>
        <position position="90"/>
    </location>
    <ligand>
        <name>Mg(2+)</name>
        <dbReference type="ChEBI" id="CHEBI:18420"/>
        <label>3</label>
    </ligand>
</feature>
<feature type="binding site" evidence="1">
    <location>
        <position position="127"/>
    </location>
    <ligand>
        <name>substrate</name>
    </ligand>
</feature>
<keyword id="KW-0963">Cytoplasm</keyword>
<keyword id="KW-0378">Hydrolase</keyword>
<keyword id="KW-0460">Magnesium</keyword>
<keyword id="KW-0479">Metal-binding</keyword>
<keyword id="KW-1185">Reference proteome</keyword>